<evidence type="ECO:0000255" key="1">
    <source>
        <dbReference type="HAMAP-Rule" id="MF_00001"/>
    </source>
</evidence>
<sequence>MNNWKHNHVLDLSTFSLEDYKTVLELTTRFKDVHKSSSRKLPALHGRLIANLFFEPSTRTRTSFELAAKRLSADVQNFSVSSSSLNKGETPLDTILTYISMGADILVIRHESTNVPAELANYVDINNINTSILNAGDGFHSHPSQGLLDLFTLATFFNPNEPSTNSLLNKKITIVGDILHSRVARSNLWALTACGAEVTLCGPPSLLPEEFIDFVQNPPLGQNFDPINKRGSVFIKRSLKDALKNSDAVMTLRLQKERMKQNMLTDLDSYYVQYGITHESLKWCEKKVPVLHPGPVNRGVEISNRLVEDNSINLISKQVENGIPTRMALLYLLGLNKKD</sequence>
<reference key="1">
    <citation type="journal article" date="2007" name="PLoS Genet.">
        <title>Patterns and implications of gene gain and loss in the evolution of Prochlorococcus.</title>
        <authorList>
            <person name="Kettler G.C."/>
            <person name="Martiny A.C."/>
            <person name="Huang K."/>
            <person name="Zucker J."/>
            <person name="Coleman M.L."/>
            <person name="Rodrigue S."/>
            <person name="Chen F."/>
            <person name="Lapidus A."/>
            <person name="Ferriera S."/>
            <person name="Johnson J."/>
            <person name="Steglich C."/>
            <person name="Church G.M."/>
            <person name="Richardson P."/>
            <person name="Chisholm S.W."/>
        </authorList>
    </citation>
    <scope>NUCLEOTIDE SEQUENCE [LARGE SCALE GENOMIC DNA]</scope>
    <source>
        <strain>NATL2A</strain>
    </source>
</reference>
<protein>
    <recommendedName>
        <fullName evidence="1">Aspartate carbamoyltransferase catalytic subunit</fullName>
        <ecNumber evidence="1">2.1.3.2</ecNumber>
    </recommendedName>
    <alternativeName>
        <fullName evidence="1">Aspartate transcarbamylase</fullName>
        <shortName evidence="1">ATCase</shortName>
    </alternativeName>
</protein>
<organism>
    <name type="scientific">Prochlorococcus marinus (strain NATL2A)</name>
    <dbReference type="NCBI Taxonomy" id="59920"/>
    <lineage>
        <taxon>Bacteria</taxon>
        <taxon>Bacillati</taxon>
        <taxon>Cyanobacteriota</taxon>
        <taxon>Cyanophyceae</taxon>
        <taxon>Synechococcales</taxon>
        <taxon>Prochlorococcaceae</taxon>
        <taxon>Prochlorococcus</taxon>
    </lineage>
</organism>
<keyword id="KW-0665">Pyrimidine biosynthesis</keyword>
<keyword id="KW-1185">Reference proteome</keyword>
<keyword id="KW-0808">Transferase</keyword>
<accession>Q46HE0</accession>
<feature type="chain" id="PRO_0000301606" description="Aspartate carbamoyltransferase catalytic subunit">
    <location>
        <begin position="1"/>
        <end position="339"/>
    </location>
</feature>
<feature type="binding site" evidence="1">
    <location>
        <position position="59"/>
    </location>
    <ligand>
        <name>carbamoyl phosphate</name>
        <dbReference type="ChEBI" id="CHEBI:58228"/>
    </ligand>
</feature>
<feature type="binding site" evidence="1">
    <location>
        <position position="60"/>
    </location>
    <ligand>
        <name>carbamoyl phosphate</name>
        <dbReference type="ChEBI" id="CHEBI:58228"/>
    </ligand>
</feature>
<feature type="binding site" evidence="1">
    <location>
        <position position="87"/>
    </location>
    <ligand>
        <name>L-aspartate</name>
        <dbReference type="ChEBI" id="CHEBI:29991"/>
    </ligand>
</feature>
<feature type="binding site" evidence="1">
    <location>
        <position position="109"/>
    </location>
    <ligand>
        <name>carbamoyl phosphate</name>
        <dbReference type="ChEBI" id="CHEBI:58228"/>
    </ligand>
</feature>
<feature type="binding site" evidence="1">
    <location>
        <position position="142"/>
    </location>
    <ligand>
        <name>carbamoyl phosphate</name>
        <dbReference type="ChEBI" id="CHEBI:58228"/>
    </ligand>
</feature>
<feature type="binding site" evidence="1">
    <location>
        <position position="145"/>
    </location>
    <ligand>
        <name>carbamoyl phosphate</name>
        <dbReference type="ChEBI" id="CHEBI:58228"/>
    </ligand>
</feature>
<feature type="binding site" evidence="1">
    <location>
        <position position="182"/>
    </location>
    <ligand>
        <name>L-aspartate</name>
        <dbReference type="ChEBI" id="CHEBI:29991"/>
    </ligand>
</feature>
<feature type="binding site" evidence="1">
    <location>
        <position position="253"/>
    </location>
    <ligand>
        <name>L-aspartate</name>
        <dbReference type="ChEBI" id="CHEBI:29991"/>
    </ligand>
</feature>
<feature type="binding site" evidence="1">
    <location>
        <position position="294"/>
    </location>
    <ligand>
        <name>carbamoyl phosphate</name>
        <dbReference type="ChEBI" id="CHEBI:58228"/>
    </ligand>
</feature>
<feature type="binding site" evidence="1">
    <location>
        <position position="295"/>
    </location>
    <ligand>
        <name>carbamoyl phosphate</name>
        <dbReference type="ChEBI" id="CHEBI:58228"/>
    </ligand>
</feature>
<dbReference type="EC" id="2.1.3.2" evidence="1"/>
<dbReference type="EMBL" id="CP000095">
    <property type="protein sequence ID" value="AAZ59088.1"/>
    <property type="molecule type" value="Genomic_DNA"/>
</dbReference>
<dbReference type="RefSeq" id="WP_011294233.1">
    <property type="nucleotide sequence ID" value="NC_007335.2"/>
</dbReference>
<dbReference type="SMR" id="Q46HE0"/>
<dbReference type="STRING" id="59920.PMN2A_1600"/>
<dbReference type="KEGG" id="pmn:PMN2A_1600"/>
<dbReference type="HOGENOM" id="CLU_043846_2_0_3"/>
<dbReference type="OrthoDB" id="9774690at2"/>
<dbReference type="PhylomeDB" id="Q46HE0"/>
<dbReference type="UniPathway" id="UPA00070">
    <property type="reaction ID" value="UER00116"/>
</dbReference>
<dbReference type="Proteomes" id="UP000002535">
    <property type="component" value="Chromosome"/>
</dbReference>
<dbReference type="GO" id="GO:0005829">
    <property type="term" value="C:cytosol"/>
    <property type="evidence" value="ECO:0007669"/>
    <property type="project" value="TreeGrafter"/>
</dbReference>
<dbReference type="GO" id="GO:0016597">
    <property type="term" value="F:amino acid binding"/>
    <property type="evidence" value="ECO:0007669"/>
    <property type="project" value="InterPro"/>
</dbReference>
<dbReference type="GO" id="GO:0004070">
    <property type="term" value="F:aspartate carbamoyltransferase activity"/>
    <property type="evidence" value="ECO:0007669"/>
    <property type="project" value="UniProtKB-UniRule"/>
</dbReference>
<dbReference type="GO" id="GO:0006207">
    <property type="term" value="P:'de novo' pyrimidine nucleobase biosynthetic process"/>
    <property type="evidence" value="ECO:0007669"/>
    <property type="project" value="InterPro"/>
</dbReference>
<dbReference type="GO" id="GO:0044205">
    <property type="term" value="P:'de novo' UMP biosynthetic process"/>
    <property type="evidence" value="ECO:0007669"/>
    <property type="project" value="UniProtKB-UniRule"/>
</dbReference>
<dbReference type="GO" id="GO:0006520">
    <property type="term" value="P:amino acid metabolic process"/>
    <property type="evidence" value="ECO:0007669"/>
    <property type="project" value="InterPro"/>
</dbReference>
<dbReference type="Gene3D" id="3.40.50.1370">
    <property type="entry name" value="Aspartate/ornithine carbamoyltransferase"/>
    <property type="match status" value="2"/>
</dbReference>
<dbReference type="HAMAP" id="MF_00001">
    <property type="entry name" value="Asp_carb_tr"/>
    <property type="match status" value="1"/>
</dbReference>
<dbReference type="InterPro" id="IPR006132">
    <property type="entry name" value="Asp/Orn_carbamoyltranf_P-bd"/>
</dbReference>
<dbReference type="InterPro" id="IPR006130">
    <property type="entry name" value="Asp/Orn_carbamoylTrfase"/>
</dbReference>
<dbReference type="InterPro" id="IPR036901">
    <property type="entry name" value="Asp/Orn_carbamoylTrfase_sf"/>
</dbReference>
<dbReference type="InterPro" id="IPR002082">
    <property type="entry name" value="Asp_carbamoyltransf"/>
</dbReference>
<dbReference type="InterPro" id="IPR006131">
    <property type="entry name" value="Asp_carbamoyltransf_Asp/Orn-bd"/>
</dbReference>
<dbReference type="NCBIfam" id="TIGR00670">
    <property type="entry name" value="asp_carb_tr"/>
    <property type="match status" value="1"/>
</dbReference>
<dbReference type="NCBIfam" id="NF002032">
    <property type="entry name" value="PRK00856.1"/>
    <property type="match status" value="1"/>
</dbReference>
<dbReference type="PANTHER" id="PTHR45753:SF6">
    <property type="entry name" value="ASPARTATE CARBAMOYLTRANSFERASE"/>
    <property type="match status" value="1"/>
</dbReference>
<dbReference type="PANTHER" id="PTHR45753">
    <property type="entry name" value="ORNITHINE CARBAMOYLTRANSFERASE, MITOCHONDRIAL"/>
    <property type="match status" value="1"/>
</dbReference>
<dbReference type="Pfam" id="PF00185">
    <property type="entry name" value="OTCace"/>
    <property type="match status" value="1"/>
</dbReference>
<dbReference type="Pfam" id="PF02729">
    <property type="entry name" value="OTCace_N"/>
    <property type="match status" value="1"/>
</dbReference>
<dbReference type="PRINTS" id="PR00100">
    <property type="entry name" value="AOTCASE"/>
</dbReference>
<dbReference type="PRINTS" id="PR00101">
    <property type="entry name" value="ATCASE"/>
</dbReference>
<dbReference type="SUPFAM" id="SSF53671">
    <property type="entry name" value="Aspartate/ornithine carbamoyltransferase"/>
    <property type="match status" value="1"/>
</dbReference>
<dbReference type="PROSITE" id="PS00097">
    <property type="entry name" value="CARBAMOYLTRANSFERASE"/>
    <property type="match status" value="1"/>
</dbReference>
<name>PYRB_PROMT</name>
<gene>
    <name evidence="1" type="primary">pyrB</name>
    <name type="ordered locus">PMN2A_1600</name>
</gene>
<proteinExistence type="inferred from homology"/>
<comment type="function">
    <text evidence="1">Catalyzes the condensation of carbamoyl phosphate and aspartate to form carbamoyl aspartate and inorganic phosphate, the committed step in the de novo pyrimidine nucleotide biosynthesis pathway.</text>
</comment>
<comment type="catalytic activity">
    <reaction evidence="1">
        <text>carbamoyl phosphate + L-aspartate = N-carbamoyl-L-aspartate + phosphate + H(+)</text>
        <dbReference type="Rhea" id="RHEA:20013"/>
        <dbReference type="ChEBI" id="CHEBI:15378"/>
        <dbReference type="ChEBI" id="CHEBI:29991"/>
        <dbReference type="ChEBI" id="CHEBI:32814"/>
        <dbReference type="ChEBI" id="CHEBI:43474"/>
        <dbReference type="ChEBI" id="CHEBI:58228"/>
        <dbReference type="EC" id="2.1.3.2"/>
    </reaction>
</comment>
<comment type="pathway">
    <text evidence="1">Pyrimidine metabolism; UMP biosynthesis via de novo pathway; (S)-dihydroorotate from bicarbonate: step 2/3.</text>
</comment>
<comment type="subunit">
    <text evidence="1">Heterododecamer (2C3:3R2) of six catalytic PyrB chains organized as two trimers (C3), and six regulatory PyrI chains organized as three dimers (R2).</text>
</comment>
<comment type="similarity">
    <text evidence="1">Belongs to the aspartate/ornithine carbamoyltransferase superfamily. ATCase family.</text>
</comment>